<dbReference type="EMBL" id="X16816">
    <property type="protein sequence ID" value="CAA34723.1"/>
    <property type="molecule type" value="Genomic_RNA"/>
</dbReference>
<dbReference type="EMBL" id="AF304460">
    <property type="protein sequence ID" value="AAG48592.1"/>
    <property type="molecule type" value="Genomic_RNA"/>
</dbReference>
<dbReference type="EMBL" id="AF344186">
    <property type="protein sequence ID" value="AAK32188.1"/>
    <property type="molecule type" value="Genomic_RNA"/>
</dbReference>
<dbReference type="EMBL" id="AF344187">
    <property type="protein sequence ID" value="AAK32189.1"/>
    <property type="molecule type" value="Genomic_RNA"/>
</dbReference>
<dbReference type="EMBL" id="AF344188">
    <property type="protein sequence ID" value="AAK32190.1"/>
    <property type="molecule type" value="Genomic_RNA"/>
</dbReference>
<dbReference type="EMBL" id="AF344189">
    <property type="protein sequence ID" value="AAK32191.1"/>
    <property type="molecule type" value="Genomic_RNA"/>
</dbReference>
<dbReference type="EMBL" id="Y09923">
    <property type="protein sequence ID" value="CAA71056.1"/>
    <property type="molecule type" value="Genomic_RNA"/>
</dbReference>
<dbReference type="EMBL" id="Y10051">
    <property type="protein sequence ID" value="CAA71146.1"/>
    <property type="molecule type" value="Genomic_RNA"/>
</dbReference>
<dbReference type="EMBL" id="Y10052">
    <property type="protein sequence ID" value="CAA71147.1"/>
    <property type="molecule type" value="Genomic_RNA"/>
</dbReference>
<dbReference type="EMBL" id="X15654">
    <property type="protein sequence ID" value="CAA33680.1"/>
    <property type="molecule type" value="Genomic_RNA"/>
</dbReference>
<dbReference type="PIR" id="A34766">
    <property type="entry name" value="VGIHHC"/>
</dbReference>
<dbReference type="RefSeq" id="NP_073551.1">
    <property type="nucleotide sequence ID" value="NC_002645.1"/>
</dbReference>
<dbReference type="PDB" id="5YL9">
    <property type="method" value="X-ray"/>
    <property type="resolution" value="1.86 A"/>
    <property type="chains" value="A=784-872, B=1052-1104"/>
</dbReference>
<dbReference type="PDB" id="5ZHY">
    <property type="method" value="X-ray"/>
    <property type="resolution" value="2.44 A"/>
    <property type="chains" value="A/B/C/D/E/F=789-856"/>
</dbReference>
<dbReference type="PDB" id="5ZUV">
    <property type="method" value="X-ray"/>
    <property type="resolution" value="2.21 A"/>
    <property type="chains" value="A/B/C=785-873"/>
</dbReference>
<dbReference type="PDB" id="6ATK">
    <property type="method" value="X-ray"/>
    <property type="resolution" value="3.50 A"/>
    <property type="chains" value="D/E/F=293-435"/>
</dbReference>
<dbReference type="PDB" id="6U7H">
    <property type="method" value="EM"/>
    <property type="resolution" value="3.10 A"/>
    <property type="chains" value="A/B/C=1-1113"/>
</dbReference>
<dbReference type="PDB" id="7CYC">
    <property type="method" value="EM"/>
    <property type="resolution" value="3.21 A"/>
    <property type="chains" value="A/B/C=1-1116"/>
</dbReference>
<dbReference type="PDB" id="7CYD">
    <property type="method" value="EM"/>
    <property type="resolution" value="3.55 A"/>
    <property type="chains" value="A/B/C=1-1116"/>
</dbReference>
<dbReference type="PDB" id="7EJM">
    <property type="method" value="X-ray"/>
    <property type="resolution" value="1.71 A"/>
    <property type="chains" value="C=1110-1118"/>
</dbReference>
<dbReference type="PDB" id="7VN9">
    <property type="method" value="X-ray"/>
    <property type="resolution" value="4.49 A"/>
    <property type="chains" value="C/E=294-435"/>
</dbReference>
<dbReference type="PDB" id="7VNG">
    <property type="method" value="X-ray"/>
    <property type="resolution" value="3.80 A"/>
    <property type="chains" value="D=294-435"/>
</dbReference>
<dbReference type="PDB" id="7YI6">
    <property type="method" value="X-ray"/>
    <property type="resolution" value="2.28 A"/>
    <property type="chains" value="A/C=835-841"/>
</dbReference>
<dbReference type="PDBsum" id="5YL9"/>
<dbReference type="PDBsum" id="5ZHY"/>
<dbReference type="PDBsum" id="5ZUV"/>
<dbReference type="PDBsum" id="6ATK"/>
<dbReference type="PDBsum" id="6U7H"/>
<dbReference type="PDBsum" id="7CYC"/>
<dbReference type="PDBsum" id="7CYD"/>
<dbReference type="PDBsum" id="7EJM"/>
<dbReference type="PDBsum" id="7VN9"/>
<dbReference type="PDBsum" id="7VNG"/>
<dbReference type="PDBsum" id="7YI6"/>
<dbReference type="EMDB" id="EMD-20668"/>
<dbReference type="EMDB" id="EMD-30496"/>
<dbReference type="EMDB" id="EMD-30497"/>
<dbReference type="EMDB" id="EMD-37462"/>
<dbReference type="SMR" id="P15423"/>
<dbReference type="ABCD" id="P15423">
    <property type="antibodies" value="6 sequenced antibodies"/>
</dbReference>
<dbReference type="DNASU" id="918758"/>
<dbReference type="GeneID" id="918758"/>
<dbReference type="KEGG" id="vg:918758"/>
<dbReference type="OrthoDB" id="538at10239"/>
<dbReference type="SABIO-RK" id="P15423"/>
<dbReference type="Proteomes" id="UP000006716">
    <property type="component" value="Genome"/>
</dbReference>
<dbReference type="GO" id="GO:0044173">
    <property type="term" value="C:host cell endoplasmic reticulum-Golgi intermediate compartment membrane"/>
    <property type="evidence" value="ECO:0007669"/>
    <property type="project" value="UniProtKB-SubCell"/>
</dbReference>
<dbReference type="GO" id="GO:0016020">
    <property type="term" value="C:membrane"/>
    <property type="evidence" value="ECO:0007669"/>
    <property type="project" value="UniProtKB-UniRule"/>
</dbReference>
<dbReference type="GO" id="GO:0019031">
    <property type="term" value="C:viral envelope"/>
    <property type="evidence" value="ECO:0007669"/>
    <property type="project" value="UniProtKB-UniRule"/>
</dbReference>
<dbReference type="GO" id="GO:0055036">
    <property type="term" value="C:virion membrane"/>
    <property type="evidence" value="ECO:0007669"/>
    <property type="project" value="UniProtKB-SubCell"/>
</dbReference>
<dbReference type="GO" id="GO:0075509">
    <property type="term" value="P:endocytosis involved in viral entry into host cell"/>
    <property type="evidence" value="ECO:0007669"/>
    <property type="project" value="UniProtKB-UniRule"/>
</dbReference>
<dbReference type="GO" id="GO:0039654">
    <property type="term" value="P:fusion of virus membrane with host endosome membrane"/>
    <property type="evidence" value="ECO:0007669"/>
    <property type="project" value="UniProtKB-UniRule"/>
</dbReference>
<dbReference type="GO" id="GO:0019064">
    <property type="term" value="P:fusion of virus membrane with host plasma membrane"/>
    <property type="evidence" value="ECO:0007669"/>
    <property type="project" value="UniProtKB-UniRule"/>
</dbReference>
<dbReference type="GO" id="GO:0046813">
    <property type="term" value="P:receptor-mediated virion attachment to host cell"/>
    <property type="evidence" value="ECO:0007669"/>
    <property type="project" value="UniProtKB-UniRule"/>
</dbReference>
<dbReference type="CDD" id="cd22375">
    <property type="entry name" value="HCoV-NL63-229E-like_Spike_SD1-2_S1-S2_S2"/>
    <property type="match status" value="1"/>
</dbReference>
<dbReference type="Gene3D" id="1.20.5.300">
    <property type="match status" value="2"/>
</dbReference>
<dbReference type="Gene3D" id="2.60.40.3130">
    <property type="match status" value="1"/>
</dbReference>
<dbReference type="HAMAP" id="MF_04200">
    <property type="entry name" value="ALPHA_CORONA_SPIKE"/>
    <property type="match status" value="1"/>
</dbReference>
<dbReference type="InterPro" id="IPR042552">
    <property type="entry name" value="ALPHA_CORONA_SPIKE"/>
</dbReference>
<dbReference type="InterPro" id="IPR043607">
    <property type="entry name" value="CoV_S1_C"/>
</dbReference>
<dbReference type="InterPro" id="IPR043473">
    <property type="entry name" value="S2_sf_CoV"/>
</dbReference>
<dbReference type="InterPro" id="IPR002551">
    <property type="entry name" value="Spike_S1_CoV"/>
</dbReference>
<dbReference type="InterPro" id="IPR002552">
    <property type="entry name" value="Spike_S2_CoV"/>
</dbReference>
<dbReference type="InterPro" id="IPR043614">
    <property type="entry name" value="Spike_S2_CoV_C"/>
</dbReference>
<dbReference type="InterPro" id="IPR044873">
    <property type="entry name" value="Spike_S2_CoV_HR1"/>
</dbReference>
<dbReference type="InterPro" id="IPR044874">
    <property type="entry name" value="Spike_S2_CoV_HR2"/>
</dbReference>
<dbReference type="Pfam" id="PF01600">
    <property type="entry name" value="CoV_S1"/>
    <property type="match status" value="1"/>
</dbReference>
<dbReference type="Pfam" id="PF19209">
    <property type="entry name" value="CoV_S1_C"/>
    <property type="match status" value="1"/>
</dbReference>
<dbReference type="Pfam" id="PF01601">
    <property type="entry name" value="CoV_S2"/>
    <property type="match status" value="1"/>
</dbReference>
<dbReference type="Pfam" id="PF19214">
    <property type="entry name" value="CoV_S2_C"/>
    <property type="match status" value="1"/>
</dbReference>
<dbReference type="SUPFAM" id="SSF111474">
    <property type="entry name" value="Coronavirus S2 glycoprotein"/>
    <property type="match status" value="2"/>
</dbReference>
<dbReference type="PROSITE" id="PS51923">
    <property type="entry name" value="COV_S2_HR1"/>
    <property type="match status" value="1"/>
</dbReference>
<dbReference type="PROSITE" id="PS51924">
    <property type="entry name" value="COV_S2_HR2"/>
    <property type="match status" value="1"/>
</dbReference>
<name>SPIKE_CVH22</name>
<evidence type="ECO:0000255" key="1">
    <source>
        <dbReference type="HAMAP-Rule" id="MF_04200"/>
    </source>
</evidence>
<evidence type="ECO:0000255" key="2">
    <source>
        <dbReference type="PROSITE-ProRule" id="PRU01271"/>
    </source>
</evidence>
<evidence type="ECO:0000255" key="3">
    <source>
        <dbReference type="PROSITE-ProRule" id="PRU01272"/>
    </source>
</evidence>
<evidence type="ECO:0000269" key="4">
    <source>
    </source>
</evidence>
<evidence type="ECO:0000269" key="5">
    <source>
    </source>
</evidence>
<evidence type="ECO:0000269" key="6">
    <source>
    </source>
</evidence>
<evidence type="ECO:0000269" key="7">
    <source>
    </source>
</evidence>
<evidence type="ECO:0007829" key="8">
    <source>
        <dbReference type="PDB" id="5YL9"/>
    </source>
</evidence>
<evidence type="ECO:0007829" key="9">
    <source>
        <dbReference type="PDB" id="6U7H"/>
    </source>
</evidence>
<evidence type="ECO:0007829" key="10">
    <source>
        <dbReference type="PDB" id="7CYC"/>
    </source>
</evidence>
<gene>
    <name evidence="1" type="primary">S</name>
    <name type="ORF">2</name>
</gene>
<proteinExistence type="evidence at protein level"/>
<feature type="signal peptide" evidence="1">
    <location>
        <begin position="1"/>
        <end position="15"/>
    </location>
</feature>
<feature type="chain" id="PRO_0000037203" description="Spike glycoprotein" evidence="1">
    <location>
        <begin position="16"/>
        <end position="1173"/>
    </location>
</feature>
<feature type="topological domain" description="Virion surface" evidence="1">
    <location>
        <begin position="16"/>
        <end position="1115"/>
    </location>
</feature>
<feature type="transmembrane region" description="Helical" evidence="1">
    <location>
        <begin position="1116"/>
        <end position="1135"/>
    </location>
</feature>
<feature type="topological domain" description="Intravirion" evidence="1">
    <location>
        <begin position="1136"/>
        <end position="1173"/>
    </location>
</feature>
<feature type="region of interest" description="S1" evidence="1">
    <location>
        <begin position="16"/>
        <end position="536"/>
    </location>
</feature>
<feature type="region of interest" description="Interaction with ANPEP">
    <location>
        <begin position="417"/>
        <end position="547"/>
    </location>
</feature>
<feature type="region of interest" description="Interaction with host ANPEP" evidence="1">
    <location>
        <begin position="417"/>
        <end position="547"/>
    </location>
</feature>
<feature type="region of interest" description="S2" evidence="1">
    <location>
        <begin position="537"/>
        <end position="1173"/>
    </location>
</feature>
<feature type="region of interest" description="Fusion peptide" evidence="1">
    <location>
        <begin position="753"/>
        <end position="773"/>
    </location>
</feature>
<feature type="region of interest" description="Heptad repeat 1 (HR1)" evidence="2">
    <location>
        <begin position="767"/>
        <end position="886"/>
    </location>
</feature>
<feature type="region of interest" description="Heptad repeat 2 (HR2)" evidence="3">
    <location>
        <begin position="1031"/>
        <end position="1127"/>
    </location>
</feature>
<feature type="coiled-coil region" evidence="1">
    <location>
        <begin position="834"/>
        <end position="878"/>
    </location>
</feature>
<feature type="coiled-coil region" evidence="1">
    <location>
        <begin position="1063"/>
        <end position="1105"/>
    </location>
</feature>
<feature type="short sequence motif" description="KxHxx" evidence="1">
    <location>
        <begin position="1169"/>
        <end position="1173"/>
    </location>
</feature>
<feature type="sequence variant" description="In strain: Isolate LRI 281.">
    <original>N</original>
    <variation>S</variation>
    <location>
        <position position="98"/>
    </location>
</feature>
<feature type="sequence variant" description="In strain: Isolate LRI 281.">
    <original>N</original>
    <variation>I</variation>
    <location>
        <position position="120"/>
    </location>
</feature>
<feature type="sequence variant" description="In strain: Isolate A162.">
    <original>LR</original>
    <variation>IS</variation>
    <location>
        <begin position="127"/>
        <end position="128"/>
    </location>
</feature>
<feature type="sequence variant" description="In strain: Isolate P100E.">
    <original>N</original>
    <variation>T</variation>
    <location>
        <position position="176"/>
    </location>
</feature>
<feature type="sequence variant" description="In strain: Isolate A162.">
    <original>T</original>
    <variation>S</variation>
    <location>
        <position position="210"/>
    </location>
</feature>
<feature type="sequence variant" description="In strain: Isolate A162.">
    <original>T</original>
    <variation>N</variation>
    <location>
        <position position="223"/>
    </location>
</feature>
<feature type="sequence variant" description="In strain: Isolate A162.">
    <original>DF</original>
    <variation>V</variation>
    <location>
        <begin position="228"/>
        <end position="229"/>
    </location>
</feature>
<feature type="sequence variant" description="In strain: Isolate RW Stock, Isolate P11A, Isolate P11B, Isolate P100E and Isolate ATCC VR-74.">
    <original>C</original>
    <variation>F</variation>
    <location>
        <position position="230"/>
    </location>
</feature>
<feature type="sequence variant" description="In strain: Isolate LRI 281.">
    <original>C</original>
    <variation>L</variation>
    <location>
        <position position="230"/>
    </location>
</feature>
<feature type="sequence variant" description="In strain: Isolate A162.">
    <original>S</original>
    <variation>A</variation>
    <location>
        <position position="248"/>
    </location>
</feature>
<feature type="sequence variant" description="In strain: Isolate P100E.">
    <original>D</original>
    <variation>Y</variation>
    <location>
        <position position="270"/>
    </location>
</feature>
<feature type="sequence variant" description="In strain: Isolate LRI 281.">
    <original>V</original>
    <variation>A</variation>
    <location>
        <position position="295"/>
    </location>
</feature>
<feature type="sequence variant" description="In strain: Isolate P100E.">
    <original>T</original>
    <variation>M</variation>
    <location>
        <position position="300"/>
    </location>
</feature>
<feature type="sequence variant" description="In strain: Isolate A162.">
    <original>D</original>
    <variation>N</variation>
    <location>
        <position position="307"/>
    </location>
</feature>
<feature type="sequence variant" description="In strain: Isolate A162.">
    <original>PQ</original>
    <variation>LR</variation>
    <location>
        <begin position="310"/>
        <end position="311"/>
    </location>
</feature>
<feature type="sequence variant" description="In strain: Isolate A162.">
    <original>GGKCFNCYPAG</original>
    <variation>VGRCYNCRPAV</variation>
    <location>
        <begin position="314"/>
        <end position="324"/>
    </location>
</feature>
<feature type="sequence variant" description="In strain: Isolate LRI 281.">
    <original>K</original>
    <variation>N</variation>
    <location>
        <position position="336"/>
    </location>
</feature>
<feature type="sequence variant" description="In strain: Isolate A162.">
    <original>KYVAVYANVG</original>
    <variation>QFVGAKFD</variation>
    <location>
        <begin position="349"/>
        <end position="358"/>
    </location>
</feature>
<feature type="sequence variant" description="In strain: Isolate A162.">
    <original>V</original>
    <variation>M</variation>
    <location>
        <position position="401"/>
    </location>
</feature>
<feature type="sequence variant" description="In strain: Isolate A162.">
    <original>WAYSKYYT</original>
    <variation>LANLNSHN</variation>
    <location>
        <begin position="404"/>
        <end position="411"/>
    </location>
</feature>
<feature type="sequence variant" description="In strain: Isolate P100E.">
    <original>S</original>
    <variation>T</variation>
    <location>
        <position position="414"/>
    </location>
</feature>
<feature type="sequence variant" description="In strain: Isolate A162.">
    <original>G</original>
    <variation>V</variation>
    <location>
        <position position="424"/>
    </location>
</feature>
<feature type="sequence variant" description="In strain: Isolate A162.">
    <original>Q</original>
    <variation>K</variation>
    <location>
        <position position="430"/>
    </location>
</feature>
<feature type="sequence variant" description="In strain: Isolate LRI 281.">
    <original>V</original>
    <variation>A</variation>
    <location>
        <position position="441"/>
    </location>
</feature>
<feature type="sequence variant" description="In strain: Isolate A162.">
    <original>D</original>
    <variation>N</variation>
    <location>
        <position position="444"/>
    </location>
</feature>
<feature type="sequence variant" description="In strain: Isolate A162.">
    <original>V</original>
    <variation>I</variation>
    <location>
        <position position="462"/>
    </location>
</feature>
<feature type="sequence variant" description="In strain: Isolate A162.">
    <original>L</original>
    <variation>V</variation>
    <location>
        <position position="481"/>
    </location>
</feature>
<feature type="sequence variant" description="In strain: Isolate A162.">
    <original>K</original>
    <variation>N</variation>
    <location>
        <position position="488"/>
    </location>
</feature>
<feature type="sequence variant" description="In strain: Isolate A162.">
    <original>L</original>
    <variation>M</variation>
    <location>
        <position position="530"/>
    </location>
</feature>
<feature type="sequence variant" description="In strain: Isolate P11A.">
    <original>I</original>
    <variation>T</variation>
    <location>
        <position position="577"/>
    </location>
</feature>
<feature type="sequence variant" description="In strain: Isolate P11B.">
    <original>V</original>
    <variation>G</variation>
    <location>
        <position position="578"/>
    </location>
</feature>
<feature type="sequence variant" description="In strain: Isolate P100E.">
    <original>T</original>
    <variation>I</variation>
    <location>
        <position position="590"/>
    </location>
</feature>
<feature type="sequence variant" description="In strain: Isolate A162.">
    <original>R</original>
    <variation>M</variation>
    <location>
        <position position="642"/>
    </location>
</feature>
<feature type="sequence variant" description="In strain: Isolate A162.">
    <original>T</original>
    <variation>R</variation>
    <location>
        <position position="681"/>
    </location>
</feature>
<feature type="sequence variant" description="In strain: Isolate RW Stock, Isolate P11A, Isolate P11B and Isolate P100E.">
    <original>L</original>
    <variation>I</variation>
    <location>
        <position position="700"/>
    </location>
</feature>
<feature type="sequence variant" description="In strain: Isolate LRI 281.">
    <original>D</original>
    <variation>N</variation>
    <location>
        <position position="711"/>
    </location>
</feature>
<feature type="sequence variant" description="In strain: Isolate RW Stock, Isolate P11A, Isolate P11B and Isolate P100E.">
    <original>K</original>
    <variation>N</variation>
    <location>
        <position position="714"/>
    </location>
</feature>
<feature type="sequence variant" description="In strain: Isolate A162.">
    <original>V</original>
    <variation>A</variation>
    <location>
        <position position="765"/>
    </location>
</feature>
<feature type="sequence variant" description="In strain: Isolate A162.">
    <original>A</original>
    <variation>S</variation>
    <location>
        <position position="775"/>
    </location>
</feature>
<feature type="sequence variant" description="In strain: Isolate P11A and Isolate P11B.">
    <original>H</original>
    <variation>Y</variation>
    <location>
        <position position="846"/>
    </location>
</feature>
<feature type="sequence variant" description="In strain: Isolate A162.">
    <original>T</original>
    <variation>I</variation>
    <location>
        <position position="871"/>
    </location>
</feature>
<feature type="sequence variant" description="In strain: Isolate A162.">
    <original>I</original>
    <variation>L</variation>
    <location>
        <position position="937"/>
    </location>
</feature>
<feature type="sequence variant" description="In strain: Isolate A162.">
    <original>T</original>
    <variation>R</variation>
    <location>
        <position position="971"/>
    </location>
</feature>
<feature type="sequence variant" description="In strain: Isolate A162.">
    <original>M</original>
    <variation>I</variation>
    <location>
        <position position="1005"/>
    </location>
</feature>
<feature type="strand" evidence="9">
    <location>
        <begin position="61"/>
        <end position="63"/>
    </location>
</feature>
<feature type="strand" evidence="9">
    <location>
        <begin position="65"/>
        <end position="86"/>
    </location>
</feature>
<feature type="strand" evidence="9">
    <location>
        <begin position="94"/>
        <end position="96"/>
    </location>
</feature>
<feature type="strand" evidence="10">
    <location>
        <begin position="97"/>
        <end position="99"/>
    </location>
</feature>
<feature type="strand" evidence="9">
    <location>
        <begin position="115"/>
        <end position="121"/>
    </location>
</feature>
<feature type="turn" evidence="9">
    <location>
        <begin position="124"/>
        <end position="127"/>
    </location>
</feature>
<feature type="strand" evidence="9">
    <location>
        <begin position="128"/>
        <end position="136"/>
    </location>
</feature>
<feature type="strand" evidence="9">
    <location>
        <begin position="139"/>
        <end position="146"/>
    </location>
</feature>
<feature type="strand" evidence="9">
    <location>
        <begin position="167"/>
        <end position="174"/>
    </location>
</feature>
<feature type="strand" evidence="9">
    <location>
        <begin position="177"/>
        <end position="185"/>
    </location>
</feature>
<feature type="strand" evidence="9">
    <location>
        <begin position="192"/>
        <end position="196"/>
    </location>
</feature>
<feature type="strand" evidence="9">
    <location>
        <begin position="200"/>
        <end position="203"/>
    </location>
</feature>
<feature type="strand" evidence="9">
    <location>
        <begin position="206"/>
        <end position="210"/>
    </location>
</feature>
<feature type="strand" evidence="9">
    <location>
        <begin position="214"/>
        <end position="220"/>
    </location>
</feature>
<feature type="strand" evidence="10">
    <location>
        <begin position="224"/>
        <end position="227"/>
    </location>
</feature>
<feature type="strand" evidence="9">
    <location>
        <begin position="229"/>
        <end position="245"/>
    </location>
</feature>
<feature type="strand" evidence="9">
    <location>
        <begin position="248"/>
        <end position="254"/>
    </location>
</feature>
<feature type="helix" evidence="9">
    <location>
        <begin position="258"/>
        <end position="264"/>
    </location>
</feature>
<feature type="turn" evidence="9">
    <location>
        <begin position="265"/>
        <end position="267"/>
    </location>
</feature>
<feature type="strand" evidence="10">
    <location>
        <begin position="268"/>
        <end position="270"/>
    </location>
</feature>
<feature type="strand" evidence="9">
    <location>
        <begin position="273"/>
        <end position="278"/>
    </location>
</feature>
<feature type="strand" evidence="9">
    <location>
        <begin position="288"/>
        <end position="291"/>
    </location>
</feature>
<feature type="strand" evidence="9">
    <location>
        <begin position="299"/>
        <end position="309"/>
    </location>
</feature>
<feature type="strand" evidence="10">
    <location>
        <begin position="313"/>
        <end position="316"/>
    </location>
</feature>
<feature type="strand" evidence="9">
    <location>
        <begin position="323"/>
        <end position="329"/>
    </location>
</feature>
<feature type="helix" evidence="9">
    <location>
        <begin position="334"/>
        <end position="336"/>
    </location>
</feature>
<feature type="strand" evidence="9">
    <location>
        <begin position="338"/>
        <end position="340"/>
    </location>
</feature>
<feature type="strand" evidence="9">
    <location>
        <begin position="343"/>
        <end position="352"/>
    </location>
</feature>
<feature type="strand" evidence="9">
    <location>
        <begin position="360"/>
        <end position="364"/>
    </location>
</feature>
<feature type="strand" evidence="10">
    <location>
        <begin position="368"/>
        <end position="371"/>
    </location>
</feature>
<feature type="helix" evidence="9">
    <location>
        <begin position="375"/>
        <end position="377"/>
    </location>
</feature>
<feature type="strand" evidence="9">
    <location>
        <begin position="381"/>
        <end position="390"/>
    </location>
</feature>
<feature type="strand" evidence="9">
    <location>
        <begin position="396"/>
        <end position="404"/>
    </location>
</feature>
<feature type="turn" evidence="9">
    <location>
        <begin position="405"/>
        <end position="407"/>
    </location>
</feature>
<feature type="strand" evidence="9">
    <location>
        <begin position="408"/>
        <end position="427"/>
    </location>
</feature>
<feature type="strand" evidence="9">
    <location>
        <begin position="445"/>
        <end position="451"/>
    </location>
</feature>
<feature type="strand" evidence="9">
    <location>
        <begin position="454"/>
        <end position="462"/>
    </location>
</feature>
<feature type="strand" evidence="9">
    <location>
        <begin position="471"/>
        <end position="474"/>
    </location>
</feature>
<feature type="strand" evidence="9">
    <location>
        <begin position="480"/>
        <end position="484"/>
    </location>
</feature>
<feature type="turn" evidence="9">
    <location>
        <begin position="486"/>
        <end position="488"/>
    </location>
</feature>
<feature type="strand" evidence="9">
    <location>
        <begin position="491"/>
        <end position="495"/>
    </location>
</feature>
<feature type="strand" evidence="9">
    <location>
        <begin position="501"/>
        <end position="519"/>
    </location>
</feature>
<feature type="helix" evidence="9">
    <location>
        <begin position="521"/>
        <end position="523"/>
    </location>
</feature>
<feature type="strand" evidence="9">
    <location>
        <begin position="525"/>
        <end position="530"/>
    </location>
</feature>
<feature type="strand" evidence="9">
    <location>
        <begin position="533"/>
        <end position="538"/>
    </location>
</feature>
<feature type="strand" evidence="9">
    <location>
        <begin position="546"/>
        <end position="550"/>
    </location>
</feature>
<feature type="strand" evidence="9">
    <location>
        <begin position="553"/>
        <end position="556"/>
    </location>
</feature>
<feature type="strand" evidence="9">
    <location>
        <begin position="561"/>
        <end position="563"/>
    </location>
</feature>
<feature type="strand" evidence="9">
    <location>
        <begin position="583"/>
        <end position="598"/>
    </location>
</feature>
<feature type="strand" evidence="9">
    <location>
        <begin position="604"/>
        <end position="606"/>
    </location>
</feature>
<feature type="helix" evidence="9">
    <location>
        <begin position="608"/>
        <end position="613"/>
    </location>
</feature>
<feature type="helix" evidence="9">
    <location>
        <begin position="617"/>
        <end position="623"/>
    </location>
</feature>
<feature type="helix" evidence="9">
    <location>
        <begin position="629"/>
        <end position="651"/>
    </location>
</feature>
<feature type="helix" evidence="9">
    <location>
        <begin position="656"/>
        <end position="661"/>
    </location>
</feature>
<feature type="helix" evidence="9">
    <location>
        <begin position="664"/>
        <end position="666"/>
    </location>
</feature>
<feature type="turn" evidence="9">
    <location>
        <begin position="667"/>
        <end position="669"/>
    </location>
</feature>
<feature type="helix" evidence="9">
    <location>
        <begin position="672"/>
        <end position="674"/>
    </location>
</feature>
<feature type="strand" evidence="9">
    <location>
        <begin position="683"/>
        <end position="686"/>
    </location>
</feature>
<feature type="helix" evidence="9">
    <location>
        <begin position="691"/>
        <end position="699"/>
    </location>
</feature>
<feature type="helix" evidence="9">
    <location>
        <begin position="712"/>
        <end position="714"/>
    </location>
</feature>
<feature type="turn" evidence="9">
    <location>
        <begin position="715"/>
        <end position="717"/>
    </location>
</feature>
<feature type="helix" evidence="9">
    <location>
        <begin position="724"/>
        <end position="730"/>
    </location>
</feature>
<feature type="strand" evidence="9">
    <location>
        <begin position="733"/>
        <end position="735"/>
    </location>
</feature>
<feature type="helix" evidence="9">
    <location>
        <begin position="742"/>
        <end position="754"/>
    </location>
</feature>
<feature type="turn" evidence="9">
    <location>
        <begin position="755"/>
        <end position="757"/>
    </location>
</feature>
<feature type="strand" evidence="10">
    <location>
        <begin position="762"/>
        <end position="764"/>
    </location>
</feature>
<feature type="helix" evidence="9">
    <location>
        <begin position="769"/>
        <end position="778"/>
    </location>
</feature>
<feature type="strand" evidence="9">
    <location>
        <begin position="782"/>
        <end position="784"/>
    </location>
</feature>
<feature type="helix" evidence="8">
    <location>
        <begin position="786"/>
        <end position="871"/>
    </location>
</feature>
<feature type="strand" evidence="9">
    <location>
        <begin position="924"/>
        <end position="941"/>
    </location>
</feature>
<feature type="strand" evidence="9">
    <location>
        <begin position="944"/>
        <end position="959"/>
    </location>
</feature>
<feature type="strand" evidence="9">
    <location>
        <begin position="964"/>
        <end position="968"/>
    </location>
</feature>
<feature type="turn" evidence="9">
    <location>
        <begin position="969"/>
        <end position="971"/>
    </location>
</feature>
<feature type="strand" evidence="9">
    <location>
        <begin position="972"/>
        <end position="976"/>
    </location>
</feature>
<feature type="strand" evidence="9">
    <location>
        <begin position="981"/>
        <end position="986"/>
    </location>
</feature>
<feature type="strand" evidence="9">
    <location>
        <begin position="989"/>
        <end position="994"/>
    </location>
</feature>
<feature type="strand" evidence="9">
    <location>
        <begin position="1007"/>
        <end position="1012"/>
    </location>
</feature>
<feature type="strand" evidence="9">
    <location>
        <begin position="1018"/>
        <end position="1021"/>
    </location>
</feature>
<feature type="helix" evidence="9">
    <location>
        <begin position="1025"/>
        <end position="1028"/>
    </location>
</feature>
<feature type="helix" evidence="8">
    <location>
        <begin position="1068"/>
        <end position="1096"/>
    </location>
</feature>
<organism>
    <name type="scientific">Human coronavirus 229E</name>
    <name type="common">HCoV-229E</name>
    <dbReference type="NCBI Taxonomy" id="11137"/>
    <lineage>
        <taxon>Viruses</taxon>
        <taxon>Riboviria</taxon>
        <taxon>Orthornavirae</taxon>
        <taxon>Pisuviricota</taxon>
        <taxon>Pisoniviricetes</taxon>
        <taxon>Nidovirales</taxon>
        <taxon>Cornidovirineae</taxon>
        <taxon>Coronaviridae</taxon>
        <taxon>Orthocoronavirinae</taxon>
        <taxon>Alphacoronavirus</taxon>
        <taxon>Duvinacovirus</taxon>
    </lineage>
</organism>
<sequence length="1173" mass="128639">MFVLLVAYALLHIAGCQTTNGLNTSYSVCNGCVGYSENVFAVESGGYIPSDFAFNNWFLLTNTSSVVDGVVRSFQPLLLNCLWSVSGLRFTTGFVYFNGTGRGDCKGFSSDVLSDVIRYNLNFEENLRRGTILFKTSYGVVVFYCTNNTLVSGDAHIPFGTVLGNFYCFVNTTIGNETTSAFVGALPKTVREFVISRTGHFYINGYRYFTLGNVEAVNFNVTTAETTDFCTVALASYADVLVNVSQTSIANIIYCNSVINRLRCDQLSFDVPDGFYSTSPIQSVELPVSIVSLPVYHKHTFIVLYVDFKPQSGGGKCFNCYPAGVNITLANFNETKGPLCVDTSHFTTKYVAVYANVGRWSASINTGNCPFSFGKVNNFVKFGSVCFSLKDIPGGCAMPIVANWAYSKYYTIGSLYVSWSDGDGITGVPQPVEGVSSFMNVTLDKCTKYNIYDVSGVGVIRVSNDTFLNGITYTSTSGNLLGFKDVTKGTIYSITPCNPPDQLVVYQQAVVGAMLSENFTSYGFSNVVELPKFFYASNGTYNCTDAVLTYSSFGVCADGSIIAVQPRNVSYDSVSAIVTANLSIPSNWTTSVQVEYLQITSTPIVVDCSTYVCNGNVRCVELLKQYTSACKTIEDALRNSARLESADVSEMLTFDKKAFTLANVSSFGDYNLSSVIPSLPTSGSRVAGRSAIEDILFSKLVTSGLGTVDADYKKCTKGLSIADLACAQYYNGIMVLPGVADAERMAMYTGSLIGGIALGGLTSAVSIPFSLAIQARLNYVALQTDVLQENQKILAASFNKAMTNIVDAFTGVNDAITQTSQALQTVATALNKIQDVVNQQGNSLNHLTSQLRQNFQAISSSIQAIYDRLDTIQADQQVDRLITGRLAALNVFVSHTLTKYTEVRASRQLAQQKVNECVKSQSKRYGFCGNGTHIFSIVNAAPEGLVFLHTVLLPTQYKDVEAWSGLCVDGTNGYVLRQPNLALYKEGNYYRITSRIMFEPRIPTMADFVQIENCNVTFVNISRSELQTIVPEYIDVNKTLQELSYKLPNYTVPDLVVEQYNQTILNLTSEISTLENKSAELNYTVQKLQTLIDNINSTLVDLKWLNRVETYIKWPWWVWLCISVVLIFVVSMLLLCCCSTGCCGFFSCFASSIRGCCESTKLPYYDVEKIHIQ</sequence>
<keyword id="KW-0002">3D-structure</keyword>
<keyword id="KW-0175">Coiled coil</keyword>
<keyword id="KW-0325">Glycoprotein</keyword>
<keyword id="KW-1043">Host membrane</keyword>
<keyword id="KW-0945">Host-virus interaction</keyword>
<keyword id="KW-0472">Membrane</keyword>
<keyword id="KW-1185">Reference proteome</keyword>
<keyword id="KW-0732">Signal</keyword>
<keyword id="KW-0812">Transmembrane</keyword>
<keyword id="KW-1133">Transmembrane helix</keyword>
<keyword id="KW-1161">Viral attachment to host cell</keyword>
<keyword id="KW-0261">Viral envelope protein</keyword>
<keyword id="KW-0946">Virion</keyword>
<keyword id="KW-0843">Virulence</keyword>
<keyword id="KW-1160">Virus entry into host cell</keyword>
<organismHost>
    <name type="scientific">Homo sapiens</name>
    <name type="common">Human</name>
    <dbReference type="NCBI Taxonomy" id="9606"/>
</organismHost>
<comment type="function">
    <text evidence="1 4 5 6 7">S1 region attaches the virion to the cell membrane by interacting with host ANPEP/aminopeptidase N, initiating the infection. Binding to the receptor probably induces conformational changes in the S glycoprotein unmasking the fusion peptide of S2 region and activating membranes fusion. S2 region belongs to the class I viral fusion protein. Under the current model, the protein has at least 3 conformational states: pre-fusion native state, pre-hairpin intermediate state, and post-fusion hairpin state. During viral and target cell membrane fusion, the coiled coil regions (heptad repeats) regions assume a trimer-of-hairpins structure, positioning the fusion peptide in close proximity to the C-terminal region of the ectodomain. The formation of this structure appears to drive apposition and subsequent fusion of viral and target cell membranes.</text>
</comment>
<comment type="subunit">
    <text evidence="1 4 5 6 7">Homotrimer. During virus morphogenesis, found in a complex with M and HE proteins. Interacts with host ANPEP.</text>
</comment>
<comment type="subcellular location">
    <subcellularLocation>
        <location evidence="1">Virion membrane</location>
        <topology evidence="1">Single-pass type I membrane protein</topology>
    </subcellularLocation>
    <subcellularLocation>
        <location evidence="1">Host endoplasmic reticulum-Golgi intermediate compartment membrane</location>
        <topology evidence="1">Single-pass type I membrane protein</topology>
    </subcellularLocation>
    <text evidence="1">Accumulates in the endoplasmic reticulum-Golgi intermediate compartment, where it participates in virus particle assembly.</text>
</comment>
<comment type="domain">
    <text evidence="1">The KxHxx motif seems to function as an ER retrieval signal.</text>
</comment>
<comment type="similarity">
    <text evidence="1">Belongs to the alphacoronaviruses spike protein family.</text>
</comment>
<comment type="caution">
    <text evidence="1">In contrast to beta- and gammacoronaviruses, S glycoprotein is not cleaved into S1 and S2.</text>
</comment>
<accession>P15423</accession>
<accession>P89342</accession>
<accession>P89343</accession>
<accession>P89344</accession>
<accession>Q66174</accession>
<accession>Q990M1</accession>
<accession>Q990M2</accession>
<accession>Q990M3</accession>
<accession>Q990M4</accession>
<reference key="1">
    <citation type="journal article" date="1990" name="J. Gen. Virol.">
        <title>Nucleotide sequence of the gene encoding the spike glycoprotein of human coronavirus HCV 229E.</title>
        <authorList>
            <person name="Raabe T."/>
            <person name="Schelle-Prinz B."/>
            <person name="Siddell S.G."/>
        </authorList>
    </citation>
    <scope>NUCLEOTIDE SEQUENCE [GENOMIC RNA]</scope>
</reference>
<reference key="2">
    <citation type="journal article" date="2001" name="J. Gen. Virol.">
        <title>Infectious RNA transcribed in vitro from a cDNA copy of the human coronavirus genome cloned in vaccinia virus.</title>
        <authorList>
            <person name="Thiel V."/>
            <person name="Herold J."/>
            <person name="Schelle B."/>
            <person name="Siddell S.G."/>
        </authorList>
    </citation>
    <scope>NUCLEOTIDE SEQUENCE [GENOMIC RNA]</scope>
</reference>
<reference key="3">
    <citation type="submission" date="2001-02" db="EMBL/GenBank/DDBJ databases">
        <title>Viral and cellular changes in a human cell line persistently infected with human coronavirus HCoV-229E.</title>
        <authorList>
            <person name="Bonavia A."/>
            <person name="Holmes K.V."/>
        </authorList>
    </citation>
    <scope>NUCLEOTIDE SEQUENCE [GENOMIC DNA] OF 98-1113</scope>
    <scope>VARIANTS</scope>
    <source>
        <strain>Isolate P100E</strain>
        <strain>Isolate P11A</strain>
        <strain>Isolate P11B</strain>
        <strain>Isolate RW Stock</strain>
    </source>
</reference>
<reference key="4">
    <citation type="journal article" date="1998" name="J. Virol. Methods">
        <title>PCR sequencing of the spike genes of geographically and chronologically distinct human coronaviruses 229E.</title>
        <authorList>
            <person name="Hays J.P."/>
            <person name="Myint S.H."/>
        </authorList>
    </citation>
    <scope>NUCLEOTIDE SEQUENCE [GENOMIC DNA] OF 98-1113</scope>
    <scope>VARIANTS</scope>
    <source>
        <strain>Isolate A162</strain>
        <strain>Isolate ATCC VR-740</strain>
        <strain>Isolate LRI 281</strain>
    </source>
</reference>
<reference key="5">
    <citation type="journal article" date="1989" name="Nucleic Acids Res.">
        <title>Nucleotide sequence of the human coronavirus HCV 229E mRNA 4 and mRNA 5 unique regions.</title>
        <authorList>
            <person name="Raabe T."/>
            <person name="Siddell S.G."/>
        </authorList>
    </citation>
    <scope>NUCLEOTIDE SEQUENCE [GENOMIC RNA] OF 1159-1173</scope>
</reference>
<reference key="6">
    <citation type="journal article" date="1992" name="Nature">
        <title>Human aminopeptidase N is a receptor for human coronavirus 229E.</title>
        <authorList>
            <person name="Yeager C.L."/>
            <person name="Ashmun R.A."/>
            <person name="Williams R.K."/>
            <person name="Cardellichio C.B."/>
            <person name="Shapiro L.H."/>
            <person name="Look A.T."/>
            <person name="Holmes K.V."/>
        </authorList>
    </citation>
    <scope>FUNCTION</scope>
    <scope>INTERACTION WITH HUMAN ANPEP</scope>
</reference>
<reference key="7">
    <citation type="journal article" date="1996" name="J. Virol.">
        <title>Feline aminopeptidase N serves as a receptor for feline, canine, porcine, and human coronaviruses in serogroup I.</title>
        <authorList>
            <person name="Tresnan D.B."/>
            <person name="Levis R."/>
            <person name="Holmes K.V."/>
        </authorList>
    </citation>
    <scope>FUNCTION</scope>
    <scope>INTERACTION WITH FELINE ANPEP</scope>
</reference>
<reference key="8">
    <citation type="journal article" date="2003" name="J. Virol.">
        <title>Identification of a receptor-binding domain of the spike glycoprotein of human coronavirus HCoV-229E.</title>
        <authorList>
            <person name="Bonavia A."/>
            <person name="Zelus B.D."/>
            <person name="Wentworth D.E."/>
            <person name="Talbot P.J."/>
            <person name="Holmes K.V."/>
        </authorList>
    </citation>
    <scope>FUNCTION</scope>
    <scope>INTERACTION WITH HUMAN ANPEP</scope>
    <scope>RECEPTOR-BINDING DOMAIN</scope>
</reference>
<reference key="9">
    <citation type="journal article" date="2003" name="J. Virol.">
        <title>Human coronavirus 229E: receptor binding domain and neutralization by soluble receptor at 37 degrees C.</title>
        <authorList>
            <person name="Breslin J.J."/>
            <person name="Mork I."/>
            <person name="Smith M.K."/>
            <person name="Vogel L.K."/>
            <person name="Hemmila E.M."/>
            <person name="Bonavia A."/>
            <person name="Talbot P.J."/>
            <person name="Sjoestrom H."/>
            <person name="Noren O."/>
            <person name="Holmes K.V."/>
        </authorList>
    </citation>
    <scope>FUNCTION</scope>
    <scope>INTERACTION WITH HUMAN ANPEP</scope>
</reference>
<reference key="10">
    <citation type="journal article" date="2001" name="Virology">
        <title>Coronavirus spike proteins in viral entry and pathogenesis.</title>
        <authorList>
            <person name="Gallagher T.M."/>
            <person name="Buchmeier M.J."/>
        </authorList>
    </citation>
    <scope>REVIEW</scope>
</reference>
<protein>
    <recommendedName>
        <fullName evidence="1">Spike glycoprotein</fullName>
        <shortName evidence="1">S glycoprotein</shortName>
    </recommendedName>
    <alternativeName>
        <fullName evidence="1">E2</fullName>
    </alternativeName>
    <alternativeName>
        <fullName evidence="1">Peplomer protein</fullName>
    </alternativeName>
</protein>